<gene>
    <name evidence="1" type="primary">mraZ</name>
    <name type="ordered locus">HS_0349</name>
</gene>
<keyword id="KW-0963">Cytoplasm</keyword>
<keyword id="KW-0238">DNA-binding</keyword>
<keyword id="KW-0677">Repeat</keyword>
<keyword id="KW-0804">Transcription</keyword>
<keyword id="KW-0805">Transcription regulation</keyword>
<accession>Q0I1E2</accession>
<feature type="chain" id="PRO_1000062880" description="Transcriptional regulator MraZ">
    <location>
        <begin position="1"/>
        <end position="152"/>
    </location>
</feature>
<feature type="domain" description="SpoVT-AbrB 1" evidence="2">
    <location>
        <begin position="5"/>
        <end position="52"/>
    </location>
</feature>
<feature type="domain" description="SpoVT-AbrB 2" evidence="2">
    <location>
        <begin position="81"/>
        <end position="124"/>
    </location>
</feature>
<dbReference type="EMBL" id="CP000436">
    <property type="protein sequence ID" value="ABI24627.1"/>
    <property type="molecule type" value="Genomic_DNA"/>
</dbReference>
<dbReference type="SMR" id="Q0I1E2"/>
<dbReference type="KEGG" id="hso:HS_0349"/>
<dbReference type="eggNOG" id="COG2001">
    <property type="taxonomic scope" value="Bacteria"/>
</dbReference>
<dbReference type="HOGENOM" id="CLU_107907_2_0_6"/>
<dbReference type="GO" id="GO:0005737">
    <property type="term" value="C:cytoplasm"/>
    <property type="evidence" value="ECO:0007669"/>
    <property type="project" value="UniProtKB-UniRule"/>
</dbReference>
<dbReference type="GO" id="GO:0009295">
    <property type="term" value="C:nucleoid"/>
    <property type="evidence" value="ECO:0007669"/>
    <property type="project" value="UniProtKB-SubCell"/>
</dbReference>
<dbReference type="GO" id="GO:0003700">
    <property type="term" value="F:DNA-binding transcription factor activity"/>
    <property type="evidence" value="ECO:0007669"/>
    <property type="project" value="UniProtKB-UniRule"/>
</dbReference>
<dbReference type="GO" id="GO:0000976">
    <property type="term" value="F:transcription cis-regulatory region binding"/>
    <property type="evidence" value="ECO:0007669"/>
    <property type="project" value="TreeGrafter"/>
</dbReference>
<dbReference type="GO" id="GO:2000143">
    <property type="term" value="P:negative regulation of DNA-templated transcription initiation"/>
    <property type="evidence" value="ECO:0007669"/>
    <property type="project" value="TreeGrafter"/>
</dbReference>
<dbReference type="CDD" id="cd16321">
    <property type="entry name" value="MraZ_C"/>
    <property type="match status" value="1"/>
</dbReference>
<dbReference type="CDD" id="cd16320">
    <property type="entry name" value="MraZ_N"/>
    <property type="match status" value="1"/>
</dbReference>
<dbReference type="FunFam" id="3.40.1550.20:FF:000001">
    <property type="entry name" value="Transcriptional regulator MraZ"/>
    <property type="match status" value="1"/>
</dbReference>
<dbReference type="Gene3D" id="3.40.1550.20">
    <property type="entry name" value="Transcriptional regulator MraZ domain"/>
    <property type="match status" value="1"/>
</dbReference>
<dbReference type="HAMAP" id="MF_01008">
    <property type="entry name" value="MraZ"/>
    <property type="match status" value="1"/>
</dbReference>
<dbReference type="InterPro" id="IPR003444">
    <property type="entry name" value="MraZ"/>
</dbReference>
<dbReference type="InterPro" id="IPR035644">
    <property type="entry name" value="MraZ_C"/>
</dbReference>
<dbReference type="InterPro" id="IPR020603">
    <property type="entry name" value="MraZ_dom"/>
</dbReference>
<dbReference type="InterPro" id="IPR035642">
    <property type="entry name" value="MraZ_N"/>
</dbReference>
<dbReference type="InterPro" id="IPR038619">
    <property type="entry name" value="MraZ_sf"/>
</dbReference>
<dbReference type="InterPro" id="IPR007159">
    <property type="entry name" value="SpoVT-AbrB_dom"/>
</dbReference>
<dbReference type="InterPro" id="IPR037914">
    <property type="entry name" value="SpoVT-AbrB_sf"/>
</dbReference>
<dbReference type="NCBIfam" id="TIGR00242">
    <property type="entry name" value="division/cell wall cluster transcriptional repressor MraZ"/>
    <property type="match status" value="1"/>
</dbReference>
<dbReference type="PANTHER" id="PTHR34701">
    <property type="entry name" value="TRANSCRIPTIONAL REGULATOR MRAZ"/>
    <property type="match status" value="1"/>
</dbReference>
<dbReference type="PANTHER" id="PTHR34701:SF1">
    <property type="entry name" value="TRANSCRIPTIONAL REGULATOR MRAZ"/>
    <property type="match status" value="1"/>
</dbReference>
<dbReference type="Pfam" id="PF02381">
    <property type="entry name" value="MraZ"/>
    <property type="match status" value="2"/>
</dbReference>
<dbReference type="SUPFAM" id="SSF89447">
    <property type="entry name" value="AbrB/MazE/MraZ-like"/>
    <property type="match status" value="1"/>
</dbReference>
<dbReference type="PROSITE" id="PS51740">
    <property type="entry name" value="SPOVT_ABRB"/>
    <property type="match status" value="2"/>
</dbReference>
<name>MRAZ_HISS1</name>
<proteinExistence type="inferred from homology"/>
<reference key="1">
    <citation type="journal article" date="2007" name="J. Bacteriol.">
        <title>Complete genome sequence of Haemophilus somnus (Histophilus somni) strain 129Pt and comparison to Haemophilus ducreyi 35000HP and Haemophilus influenzae Rd.</title>
        <authorList>
            <person name="Challacombe J.F."/>
            <person name="Duncan A.J."/>
            <person name="Brettin T.S."/>
            <person name="Bruce D."/>
            <person name="Chertkov O."/>
            <person name="Detter J.C."/>
            <person name="Han C.S."/>
            <person name="Misra M."/>
            <person name="Richardson P."/>
            <person name="Tapia R."/>
            <person name="Thayer N."/>
            <person name="Xie G."/>
            <person name="Inzana T.J."/>
        </authorList>
    </citation>
    <scope>NUCLEOTIDE SEQUENCE [LARGE SCALE GENOMIC DNA]</scope>
    <source>
        <strain>129Pt</strain>
    </source>
</reference>
<protein>
    <recommendedName>
        <fullName>Transcriptional regulator MraZ</fullName>
    </recommendedName>
</protein>
<organism>
    <name type="scientific">Histophilus somni (strain 129Pt)</name>
    <name type="common">Haemophilus somnus</name>
    <dbReference type="NCBI Taxonomy" id="205914"/>
    <lineage>
        <taxon>Bacteria</taxon>
        <taxon>Pseudomonadati</taxon>
        <taxon>Pseudomonadota</taxon>
        <taxon>Gammaproteobacteria</taxon>
        <taxon>Pasteurellales</taxon>
        <taxon>Pasteurellaceae</taxon>
        <taxon>Histophilus</taxon>
    </lineage>
</organism>
<sequence length="152" mass="17236">MFRGASAVNLDSKGRIAIPTRYRPEILEINQGQMVCTVDIRQSCLLLYPLNQWEIIEQKLSKLSNFNPEERSLQRVMLGYATECELDSAGRILISAPLRQHAKLEKSIMLVGQLNKFEIWSESEWQAQIEKDMTLGASGQFAMSEALSMLSL</sequence>
<comment type="subunit">
    <text evidence="1">Forms oligomers.</text>
</comment>
<comment type="subcellular location">
    <subcellularLocation>
        <location evidence="1">Cytoplasm</location>
        <location evidence="1">Nucleoid</location>
    </subcellularLocation>
</comment>
<comment type="similarity">
    <text evidence="1">Belongs to the MraZ family.</text>
</comment>
<evidence type="ECO:0000255" key="1">
    <source>
        <dbReference type="HAMAP-Rule" id="MF_01008"/>
    </source>
</evidence>
<evidence type="ECO:0000255" key="2">
    <source>
        <dbReference type="PROSITE-ProRule" id="PRU01076"/>
    </source>
</evidence>